<gene>
    <name type="ordered locus">Dgeo_2194</name>
</gene>
<evidence type="ECO:0000255" key="1">
    <source>
        <dbReference type="HAMAP-Rule" id="MF_00693"/>
    </source>
</evidence>
<evidence type="ECO:0000256" key="2">
    <source>
        <dbReference type="SAM" id="MobiDB-lite"/>
    </source>
</evidence>
<organism>
    <name type="scientific">Deinococcus geothermalis (strain DSM 11300 / CIP 105573 / AG-3a)</name>
    <dbReference type="NCBI Taxonomy" id="319795"/>
    <lineage>
        <taxon>Bacteria</taxon>
        <taxon>Thermotogati</taxon>
        <taxon>Deinococcota</taxon>
        <taxon>Deinococci</taxon>
        <taxon>Deinococcales</taxon>
        <taxon>Deinococcaceae</taxon>
        <taxon>Deinococcus</taxon>
    </lineage>
</organism>
<sequence length="244" mass="25560">MAGHSKWAQIKRKKGANDKKRSAIYSKHIRAIQAAVRSGGSGDPAANLALKNAIAAAKADTVPADNIENAIKRAVGAAEGAADYKEVTYEGYGPGGTAIFIEALTDNVNRTVADIRAVFNKRGGSLGNSGSVAWQFEKKGVILLSDTSEAAQEVAIENGAEDIQESVDGLEISTAPNDLYAVQDALSAAGFKPESGQITMIPSNTVAVNGDDARKLMALVDALEDLDDVQNVYTNADLPEEVEA</sequence>
<comment type="subcellular location">
    <subcellularLocation>
        <location evidence="1">Cytoplasm</location>
    </subcellularLocation>
</comment>
<comment type="similarity">
    <text evidence="1">Belongs to the TACO1 family.</text>
</comment>
<protein>
    <recommendedName>
        <fullName evidence="1">Probable transcriptional regulatory protein Dgeo_2194</fullName>
    </recommendedName>
</protein>
<name>Y2194_DEIGD</name>
<accession>Q1IW96</accession>
<feature type="chain" id="PRO_0000257057" description="Probable transcriptional regulatory protein Dgeo_2194">
    <location>
        <begin position="1"/>
        <end position="244"/>
    </location>
</feature>
<feature type="region of interest" description="Disordered" evidence="2">
    <location>
        <begin position="1"/>
        <end position="21"/>
    </location>
</feature>
<proteinExistence type="inferred from homology"/>
<reference key="1">
    <citation type="submission" date="2006-04" db="EMBL/GenBank/DDBJ databases">
        <title>Complete sequence of chromosome of Deinococcus geothermalis DSM 11300.</title>
        <authorList>
            <person name="Copeland A."/>
            <person name="Lucas S."/>
            <person name="Lapidus A."/>
            <person name="Barry K."/>
            <person name="Detter J.C."/>
            <person name="Glavina del Rio T."/>
            <person name="Hammon N."/>
            <person name="Israni S."/>
            <person name="Dalin E."/>
            <person name="Tice H."/>
            <person name="Pitluck S."/>
            <person name="Brettin T."/>
            <person name="Bruce D."/>
            <person name="Han C."/>
            <person name="Tapia R."/>
            <person name="Saunders E."/>
            <person name="Gilna P."/>
            <person name="Schmutz J."/>
            <person name="Larimer F."/>
            <person name="Land M."/>
            <person name="Hauser L."/>
            <person name="Kyrpides N."/>
            <person name="Kim E."/>
            <person name="Daly M.J."/>
            <person name="Fredrickson J.K."/>
            <person name="Makarova K.S."/>
            <person name="Gaidamakova E.K."/>
            <person name="Zhai M."/>
            <person name="Richardson P."/>
        </authorList>
    </citation>
    <scope>NUCLEOTIDE SEQUENCE [LARGE SCALE GENOMIC DNA]</scope>
    <source>
        <strain>DSM 11300 / CIP 105573 / AG-3a</strain>
    </source>
</reference>
<dbReference type="EMBL" id="CP000359">
    <property type="protein sequence ID" value="ABF46488.1"/>
    <property type="molecule type" value="Genomic_DNA"/>
</dbReference>
<dbReference type="RefSeq" id="WP_011531312.1">
    <property type="nucleotide sequence ID" value="NC_008025.1"/>
</dbReference>
<dbReference type="SMR" id="Q1IW96"/>
<dbReference type="STRING" id="319795.Dgeo_2194"/>
<dbReference type="KEGG" id="dge:Dgeo_2194"/>
<dbReference type="eggNOG" id="COG0217">
    <property type="taxonomic scope" value="Bacteria"/>
</dbReference>
<dbReference type="HOGENOM" id="CLU_062974_2_2_0"/>
<dbReference type="Proteomes" id="UP000002431">
    <property type="component" value="Chromosome"/>
</dbReference>
<dbReference type="GO" id="GO:0005829">
    <property type="term" value="C:cytosol"/>
    <property type="evidence" value="ECO:0007669"/>
    <property type="project" value="TreeGrafter"/>
</dbReference>
<dbReference type="GO" id="GO:0003677">
    <property type="term" value="F:DNA binding"/>
    <property type="evidence" value="ECO:0007669"/>
    <property type="project" value="UniProtKB-UniRule"/>
</dbReference>
<dbReference type="GO" id="GO:0006355">
    <property type="term" value="P:regulation of DNA-templated transcription"/>
    <property type="evidence" value="ECO:0007669"/>
    <property type="project" value="UniProtKB-UniRule"/>
</dbReference>
<dbReference type="FunFam" id="1.10.10.200:FF:000002">
    <property type="entry name" value="Probable transcriptional regulatory protein CLM62_37755"/>
    <property type="match status" value="1"/>
</dbReference>
<dbReference type="FunFam" id="3.30.70.980:FF:000002">
    <property type="entry name" value="Probable transcriptional regulatory protein YebC"/>
    <property type="match status" value="1"/>
</dbReference>
<dbReference type="Gene3D" id="1.10.10.200">
    <property type="match status" value="1"/>
</dbReference>
<dbReference type="Gene3D" id="3.30.70.980">
    <property type="match status" value="2"/>
</dbReference>
<dbReference type="HAMAP" id="MF_00693">
    <property type="entry name" value="Transcrip_reg_TACO1"/>
    <property type="match status" value="1"/>
</dbReference>
<dbReference type="InterPro" id="IPR017856">
    <property type="entry name" value="Integrase-like_N"/>
</dbReference>
<dbReference type="InterPro" id="IPR048300">
    <property type="entry name" value="TACO1_YebC-like_2nd/3rd_dom"/>
</dbReference>
<dbReference type="InterPro" id="IPR049083">
    <property type="entry name" value="TACO1_YebC_N"/>
</dbReference>
<dbReference type="InterPro" id="IPR002876">
    <property type="entry name" value="Transcrip_reg_TACO1-like"/>
</dbReference>
<dbReference type="InterPro" id="IPR026564">
    <property type="entry name" value="Transcrip_reg_TACO1-like_dom3"/>
</dbReference>
<dbReference type="InterPro" id="IPR029072">
    <property type="entry name" value="YebC-like"/>
</dbReference>
<dbReference type="NCBIfam" id="NF001030">
    <property type="entry name" value="PRK00110.1"/>
    <property type="match status" value="1"/>
</dbReference>
<dbReference type="NCBIfam" id="NF009044">
    <property type="entry name" value="PRK12378.1"/>
    <property type="match status" value="1"/>
</dbReference>
<dbReference type="NCBIfam" id="TIGR01033">
    <property type="entry name" value="YebC/PmpR family DNA-binding transcriptional regulator"/>
    <property type="match status" value="1"/>
</dbReference>
<dbReference type="PANTHER" id="PTHR12532:SF6">
    <property type="entry name" value="TRANSCRIPTIONAL REGULATORY PROTEIN YEBC-RELATED"/>
    <property type="match status" value="1"/>
</dbReference>
<dbReference type="PANTHER" id="PTHR12532">
    <property type="entry name" value="TRANSLATIONAL ACTIVATOR OF CYTOCHROME C OXIDASE 1"/>
    <property type="match status" value="1"/>
</dbReference>
<dbReference type="Pfam" id="PF20772">
    <property type="entry name" value="TACO1_YebC_N"/>
    <property type="match status" value="1"/>
</dbReference>
<dbReference type="Pfam" id="PF01709">
    <property type="entry name" value="Transcrip_reg"/>
    <property type="match status" value="1"/>
</dbReference>
<dbReference type="SUPFAM" id="SSF75625">
    <property type="entry name" value="YebC-like"/>
    <property type="match status" value="1"/>
</dbReference>
<keyword id="KW-0963">Cytoplasm</keyword>
<keyword id="KW-0238">DNA-binding</keyword>
<keyword id="KW-0804">Transcription</keyword>
<keyword id="KW-0805">Transcription regulation</keyword>